<gene>
    <name evidence="1" type="primary">ycjF</name>
    <name type="ordered locus">SbBS512_E1555</name>
</gene>
<sequence length="353" mass="39361">MTEPLKPRIDFDGPLEVDQNPKFRAQQTFDENQAQNFAPATLDEAPEEEGQVEAVMDAALRPKRSLWRKMVMGGLALFGASVVGQGVQWTMNAWQTQDWVALGGCAAGALIIGAGVGSVVTEWRRLWRLRQRAHERDEARDLLHSHGTGKGRAFCEKLAQQAGIDQSHPALQRWYASIHETQNDREVVSLYAHLVQPVLDAQARREISRSAAESTLMIAVSPLALVDMAFIAWRNLRLINRIATLYGIELGYYSRLRLFKLVLLNIAFAGASELVREVGMDWMSQDLAARLSTRAAQGIGAGLLTARLGIKAMELCRPLPWIDDDKPRLGDFRRQLIGQVKETLQKGKTPSEK</sequence>
<dbReference type="EMBL" id="CP001063">
    <property type="protein sequence ID" value="ACD10144.1"/>
    <property type="molecule type" value="Genomic_DNA"/>
</dbReference>
<dbReference type="RefSeq" id="WP_000138717.1">
    <property type="nucleotide sequence ID" value="NC_010658.1"/>
</dbReference>
<dbReference type="SMR" id="B2U0L5"/>
<dbReference type="STRING" id="344609.SbBS512_E1555"/>
<dbReference type="KEGG" id="sbc:SbBS512_E1555"/>
<dbReference type="HOGENOM" id="CLU_057693_2_0_6"/>
<dbReference type="Proteomes" id="UP000001030">
    <property type="component" value="Chromosome"/>
</dbReference>
<dbReference type="GO" id="GO:0005886">
    <property type="term" value="C:plasma membrane"/>
    <property type="evidence" value="ECO:0007669"/>
    <property type="project" value="UniProtKB-SubCell"/>
</dbReference>
<dbReference type="HAMAP" id="MF_01085">
    <property type="entry name" value="UPF0283"/>
    <property type="match status" value="1"/>
</dbReference>
<dbReference type="InterPro" id="IPR021147">
    <property type="entry name" value="DUF697"/>
</dbReference>
<dbReference type="InterPro" id="IPR006507">
    <property type="entry name" value="UPF0283"/>
</dbReference>
<dbReference type="NCBIfam" id="TIGR01620">
    <property type="entry name" value="hyp_HI0043"/>
    <property type="match status" value="1"/>
</dbReference>
<dbReference type="PANTHER" id="PTHR39342">
    <property type="entry name" value="UPF0283 MEMBRANE PROTEIN YCJF"/>
    <property type="match status" value="1"/>
</dbReference>
<dbReference type="PANTHER" id="PTHR39342:SF1">
    <property type="entry name" value="UPF0283 MEMBRANE PROTEIN YCJF"/>
    <property type="match status" value="1"/>
</dbReference>
<dbReference type="Pfam" id="PF05128">
    <property type="entry name" value="DUF697"/>
    <property type="match status" value="1"/>
</dbReference>
<proteinExistence type="inferred from homology"/>
<protein>
    <recommendedName>
        <fullName evidence="1">UPF0283 membrane protein YcjF</fullName>
    </recommendedName>
</protein>
<feature type="chain" id="PRO_1000136901" description="UPF0283 membrane protein YcjF">
    <location>
        <begin position="1"/>
        <end position="353"/>
    </location>
</feature>
<feature type="transmembrane region" description="Helical" evidence="1">
    <location>
        <begin position="70"/>
        <end position="90"/>
    </location>
</feature>
<feature type="transmembrane region" description="Helical" evidence="1">
    <location>
        <begin position="100"/>
        <end position="120"/>
    </location>
</feature>
<feature type="transmembrane region" description="Helical" evidence="1">
    <location>
        <begin position="213"/>
        <end position="233"/>
    </location>
</feature>
<name>YCJF_SHIB3</name>
<organism>
    <name type="scientific">Shigella boydii serotype 18 (strain CDC 3083-94 / BS512)</name>
    <dbReference type="NCBI Taxonomy" id="344609"/>
    <lineage>
        <taxon>Bacteria</taxon>
        <taxon>Pseudomonadati</taxon>
        <taxon>Pseudomonadota</taxon>
        <taxon>Gammaproteobacteria</taxon>
        <taxon>Enterobacterales</taxon>
        <taxon>Enterobacteriaceae</taxon>
        <taxon>Shigella</taxon>
    </lineage>
</organism>
<reference key="1">
    <citation type="submission" date="2008-05" db="EMBL/GenBank/DDBJ databases">
        <title>Complete sequence of Shigella boydii serotype 18 strain BS512.</title>
        <authorList>
            <person name="Rasko D.A."/>
            <person name="Rosovitz M."/>
            <person name="Maurelli A.T."/>
            <person name="Myers G."/>
            <person name="Seshadri R."/>
            <person name="Cer R."/>
            <person name="Jiang L."/>
            <person name="Ravel J."/>
            <person name="Sebastian Y."/>
        </authorList>
    </citation>
    <scope>NUCLEOTIDE SEQUENCE [LARGE SCALE GENOMIC DNA]</scope>
    <source>
        <strain>CDC 3083-94 / BS512</strain>
    </source>
</reference>
<evidence type="ECO:0000255" key="1">
    <source>
        <dbReference type="HAMAP-Rule" id="MF_01085"/>
    </source>
</evidence>
<keyword id="KW-0997">Cell inner membrane</keyword>
<keyword id="KW-1003">Cell membrane</keyword>
<keyword id="KW-0472">Membrane</keyword>
<keyword id="KW-1185">Reference proteome</keyword>
<keyword id="KW-0812">Transmembrane</keyword>
<keyword id="KW-1133">Transmembrane helix</keyword>
<comment type="subcellular location">
    <subcellularLocation>
        <location evidence="1">Cell inner membrane</location>
        <topology evidence="1">Multi-pass membrane protein</topology>
    </subcellularLocation>
</comment>
<comment type="similarity">
    <text evidence="1">Belongs to the UPF0283 family.</text>
</comment>
<accession>B2U0L5</accession>